<name>Y1786_FRAP2</name>
<gene>
    <name type="ordered locus">Fphi_1781</name>
</gene>
<sequence length="106" mass="11290">MILTTADTLGKREIIEYKGLVTGIIVRTPTITQGILGGLKNIIGGKNTSYTNVCKEARLHAEQEMINQAQELGANAIVAIRYDSSSLGGTTSGTEVFCYGTAVVIR</sequence>
<protein>
    <recommendedName>
        <fullName evidence="1">UPF0145 protein Fphi_1781</fullName>
    </recommendedName>
</protein>
<reference key="1">
    <citation type="submission" date="2007-12" db="EMBL/GenBank/DDBJ databases">
        <title>Complete sequence of chromosome of Francisella philomiragia subsp. philomiragia ATCC 25017.</title>
        <authorList>
            <consortium name="US DOE Joint Genome Institute"/>
            <person name="Copeland A."/>
            <person name="Lucas S."/>
            <person name="Lapidus A."/>
            <person name="Barry K."/>
            <person name="Detter J.C."/>
            <person name="Glavina del Rio T."/>
            <person name="Hammon N."/>
            <person name="Israni S."/>
            <person name="Dalin E."/>
            <person name="Tice H."/>
            <person name="Pitluck S."/>
            <person name="Chain P."/>
            <person name="Malfatti S."/>
            <person name="Shin M."/>
            <person name="Vergez L."/>
            <person name="Schmutz J."/>
            <person name="Larimer F."/>
            <person name="Land M."/>
            <person name="Hauser L."/>
            <person name="Richardson P."/>
        </authorList>
    </citation>
    <scope>NUCLEOTIDE SEQUENCE [LARGE SCALE GENOMIC DNA]</scope>
    <source>
        <strain>ATCC 25017 / CCUG 19701 / FSC 153 / O#319-036</strain>
    </source>
</reference>
<organism>
    <name type="scientific">Francisella philomiragia subsp. philomiragia (strain ATCC 25017 / CCUG 19701 / FSC 153 / O#319-036)</name>
    <dbReference type="NCBI Taxonomy" id="484022"/>
    <lineage>
        <taxon>Bacteria</taxon>
        <taxon>Pseudomonadati</taxon>
        <taxon>Pseudomonadota</taxon>
        <taxon>Gammaproteobacteria</taxon>
        <taxon>Thiotrichales</taxon>
        <taxon>Francisellaceae</taxon>
        <taxon>Francisella</taxon>
    </lineage>
</organism>
<comment type="similarity">
    <text evidence="1">Belongs to the UPF0145 family.</text>
</comment>
<evidence type="ECO:0000255" key="1">
    <source>
        <dbReference type="HAMAP-Rule" id="MF_00338"/>
    </source>
</evidence>
<accession>B0U0Q5</accession>
<feature type="chain" id="PRO_1000079302" description="UPF0145 protein Fphi_1781">
    <location>
        <begin position="1"/>
        <end position="106"/>
    </location>
</feature>
<proteinExistence type="inferred from homology"/>
<dbReference type="EMBL" id="CP000937">
    <property type="protein sequence ID" value="ABZ88008.1"/>
    <property type="molecule type" value="Genomic_DNA"/>
</dbReference>
<dbReference type="SMR" id="B0U0Q5"/>
<dbReference type="KEGG" id="fph:Fphi_1781"/>
<dbReference type="eggNOG" id="COG0393">
    <property type="taxonomic scope" value="Bacteria"/>
</dbReference>
<dbReference type="HOGENOM" id="CLU_117144_1_1_6"/>
<dbReference type="Gene3D" id="3.30.110.70">
    <property type="entry name" value="Hypothetical protein apc22750. Chain B"/>
    <property type="match status" value="1"/>
</dbReference>
<dbReference type="HAMAP" id="MF_00338">
    <property type="entry name" value="UPF0145"/>
    <property type="match status" value="1"/>
</dbReference>
<dbReference type="InterPro" id="IPR035439">
    <property type="entry name" value="UPF0145_dom_sf"/>
</dbReference>
<dbReference type="InterPro" id="IPR002765">
    <property type="entry name" value="UPF0145_YbjQ-like"/>
</dbReference>
<dbReference type="PANTHER" id="PTHR34068:SF2">
    <property type="entry name" value="UPF0145 PROTEIN SCO3412"/>
    <property type="match status" value="1"/>
</dbReference>
<dbReference type="PANTHER" id="PTHR34068">
    <property type="entry name" value="UPF0145 PROTEIN YBJQ"/>
    <property type="match status" value="1"/>
</dbReference>
<dbReference type="Pfam" id="PF01906">
    <property type="entry name" value="YbjQ_1"/>
    <property type="match status" value="1"/>
</dbReference>
<dbReference type="SUPFAM" id="SSF117782">
    <property type="entry name" value="YbjQ-like"/>
    <property type="match status" value="1"/>
</dbReference>